<feature type="chain" id="PRO_0000403986" description="Flavone O-methyltransferase 1">
    <location>
        <begin position="1"/>
        <end position="360"/>
    </location>
</feature>
<feature type="region of interest" description="Substrate binding" evidence="1">
    <location>
        <begin position="159"/>
        <end position="177"/>
    </location>
</feature>
<feature type="active site" description="Proton acceptor" evidence="2">
    <location>
        <position position="266"/>
    </location>
</feature>
<feature type="binding site" evidence="1">
    <location>
        <begin position="127"/>
        <end position="133"/>
    </location>
    <ligand>
        <name>substrate</name>
    </ligand>
</feature>
<feature type="binding site" evidence="2">
    <location>
        <position position="205"/>
    </location>
    <ligand>
        <name>S-adenosyl-L-methionine</name>
        <dbReference type="ChEBI" id="CHEBI:59789"/>
    </ligand>
</feature>
<feature type="binding site" evidence="2">
    <location>
        <position position="228"/>
    </location>
    <ligand>
        <name>S-adenosyl-L-methionine</name>
        <dbReference type="ChEBI" id="CHEBI:59789"/>
    </ligand>
</feature>
<feature type="binding site" evidence="2">
    <location>
        <position position="248"/>
    </location>
    <ligand>
        <name>S-adenosyl-L-methionine</name>
        <dbReference type="ChEBI" id="CHEBI:59789"/>
    </ligand>
</feature>
<feature type="binding site" evidence="2">
    <location>
        <position position="249"/>
    </location>
    <ligand>
        <name>S-adenosyl-L-methionine</name>
        <dbReference type="ChEBI" id="CHEBI:59789"/>
    </ligand>
</feature>
<feature type="binding site" evidence="2">
    <location>
        <position position="262"/>
    </location>
    <ligand>
        <name>S-adenosyl-L-methionine</name>
        <dbReference type="ChEBI" id="CHEBI:59789"/>
    </ligand>
</feature>
<gene>
    <name type="primary">OMT1</name>
    <name type="synonym">COMT1</name>
</gene>
<protein>
    <recommendedName>
        <fullName>Flavone O-methyltransferase 1</fullName>
        <ecNumber>2.1.1.-</ecNumber>
    </recommendedName>
    <alternativeName>
        <fullName>Caffeic acid O-methyltransferase</fullName>
        <shortName>TaCOMT1</shortName>
    </alternativeName>
</protein>
<name>FOMT1_WHEAT</name>
<comment type="function">
    <text evidence="3">Flavone-specific O-methyltransferase with a preference for flavones &gt; flavonols. Active with tricetin, luteolin, quercitin and eriodictyol. Very low activity with phenylpropanoids (5-hydroxyferulic acid and caffeic acid). Catalyzes the sequential O-methylation of tricetin via 3'-O-methyltricetin, 3',5'-O-methyltricetin to 3',4',5'-O-trimethyltricetin.</text>
</comment>
<comment type="biophysicochemical properties">
    <kinetics>
        <KM evidence="3">4.07 uM for tricetin</KM>
        <Vmax evidence="3">11.64 pmol/sec/mg enzyme with tricetin as methyl acceptor</Vmax>
    </kinetics>
</comment>
<comment type="subunit">
    <text evidence="1">Homodimer.</text>
</comment>
<comment type="induction">
    <text evidence="4">Up-regulated by Hessian fly larval infestation, salicylic acid, ethylene, H(2)O(2) and wounding. Not induced by methyl jasmonate.</text>
</comment>
<comment type="miscellaneous">
    <text>OMT1 has a very low activity with phenylpropanoids (5-hydroxyferulic acid and caffeic acid) while OMT2 has a good activity with them.</text>
</comment>
<comment type="similarity">
    <text evidence="2">Belongs to the class I-like SAM-binding methyltransferase superfamily. Cation-independent O-methyltransferase family. COMT subfamily.</text>
</comment>
<proteinExistence type="evidence at protein level"/>
<dbReference type="EC" id="2.1.1.-"/>
<dbReference type="EMBL" id="AY226581">
    <property type="protein sequence ID" value="AAP23942.1"/>
    <property type="molecule type" value="mRNA"/>
</dbReference>
<dbReference type="SMR" id="Q84N28"/>
<dbReference type="STRING" id="4565.Q84N28"/>
<dbReference type="PaxDb" id="4565-Traes_7DL_930094B08.1"/>
<dbReference type="EnsemblPlants" id="TraesARI7B03G04127180.1">
    <property type="protein sequence ID" value="TraesARI7B03G04127180.1"/>
    <property type="gene ID" value="TraesARI7B03G04127180"/>
</dbReference>
<dbReference type="EnsemblPlants" id="TraesCAD_scaffold_063459_01G000100.1">
    <property type="protein sequence ID" value="TraesCAD_scaffold_063459_01G000100.1"/>
    <property type="gene ID" value="TraesCAD_scaffold_063459_01G000100"/>
</dbReference>
<dbReference type="EnsemblPlants" id="TraesCLE_scaffold_139309_01G000100.1">
    <property type="protein sequence ID" value="TraesCLE_scaffold_139309_01G000100.1"/>
    <property type="gene ID" value="TraesCLE_scaffold_139309_01G000100"/>
</dbReference>
<dbReference type="EnsemblPlants" id="TraesCS7B02G245500.1">
    <property type="protein sequence ID" value="TraesCS7B02G245500.1"/>
    <property type="gene ID" value="TraesCS7B02G245500"/>
</dbReference>
<dbReference type="EnsemblPlants" id="TraesCS7B03G0680100.1">
    <property type="protein sequence ID" value="TraesCS7B03G0680100.1.CDS"/>
    <property type="gene ID" value="TraesCS7B03G0680100"/>
</dbReference>
<dbReference type="EnsemblPlants" id="TraesJAG7B03G04147160.1">
    <property type="protein sequence ID" value="TraesJAG7B03G04147160.1"/>
    <property type="gene ID" value="TraesJAG7B03G04147160"/>
</dbReference>
<dbReference type="EnsemblPlants" id="TraesJUL7B03G04203790.1">
    <property type="protein sequence ID" value="TraesJUL7B03G04203790.1"/>
    <property type="gene ID" value="TraesJUL7B03G04203790"/>
</dbReference>
<dbReference type="EnsemblPlants" id="TraesNOR7B03G04210950.1">
    <property type="protein sequence ID" value="TraesNOR7B03G04210950.1"/>
    <property type="gene ID" value="TraesNOR7B03G04210950"/>
</dbReference>
<dbReference type="EnsemblPlants" id="TraesPARA_EIv1.0_2433300.1">
    <property type="protein sequence ID" value="TraesPARA_EIv1.0_2433300.1.CDS"/>
    <property type="gene ID" value="TraesPARA_EIv1.0_2433300"/>
</dbReference>
<dbReference type="EnsemblPlants" id="TraesROB_scaffold_057321_01G000100.1">
    <property type="protein sequence ID" value="TraesROB_scaffold_057321_01G000100.1"/>
    <property type="gene ID" value="TraesROB_scaffold_057321_01G000100"/>
</dbReference>
<dbReference type="EnsemblPlants" id="TraesSYM7B03G04213830.1">
    <property type="protein sequence ID" value="TraesSYM7B03G04213830.1"/>
    <property type="gene ID" value="TraesSYM7B03G04213830"/>
</dbReference>
<dbReference type="Gramene" id="TraesARI7B03G04127180.1">
    <property type="protein sequence ID" value="TraesARI7B03G04127180.1"/>
    <property type="gene ID" value="TraesARI7B03G04127180"/>
</dbReference>
<dbReference type="Gramene" id="TraesCAD_scaffold_063459_01G000100.1">
    <property type="protein sequence ID" value="TraesCAD_scaffold_063459_01G000100.1"/>
    <property type="gene ID" value="TraesCAD_scaffold_063459_01G000100"/>
</dbReference>
<dbReference type="Gramene" id="TraesCLE_scaffold_139309_01G000100.1">
    <property type="protein sequence ID" value="TraesCLE_scaffold_139309_01G000100.1"/>
    <property type="gene ID" value="TraesCLE_scaffold_139309_01G000100"/>
</dbReference>
<dbReference type="Gramene" id="TraesCS7B02G245500.1">
    <property type="protein sequence ID" value="TraesCS7B02G245500.1"/>
    <property type="gene ID" value="TraesCS7B02G245500"/>
</dbReference>
<dbReference type="Gramene" id="TraesCS7B03G0680100.1">
    <property type="protein sequence ID" value="TraesCS7B03G0680100.1.CDS"/>
    <property type="gene ID" value="TraesCS7B03G0680100"/>
</dbReference>
<dbReference type="Gramene" id="TraesJAG7B03G04147160.1">
    <property type="protein sequence ID" value="TraesJAG7B03G04147160.1"/>
    <property type="gene ID" value="TraesJAG7B03G04147160"/>
</dbReference>
<dbReference type="Gramene" id="TraesJUL7B03G04203790.1">
    <property type="protein sequence ID" value="TraesJUL7B03G04203790.1"/>
    <property type="gene ID" value="TraesJUL7B03G04203790"/>
</dbReference>
<dbReference type="Gramene" id="TraesNOR7B03G04210950.1">
    <property type="protein sequence ID" value="TraesNOR7B03G04210950.1"/>
    <property type="gene ID" value="TraesNOR7B03G04210950"/>
</dbReference>
<dbReference type="Gramene" id="TraesPARA_EIv1.0_2433300.1">
    <property type="protein sequence ID" value="TraesPARA_EIv1.0_2433300.1.CDS"/>
    <property type="gene ID" value="TraesPARA_EIv1.0_2433300"/>
</dbReference>
<dbReference type="Gramene" id="TraesROB_scaffold_057321_01G000100.1">
    <property type="protein sequence ID" value="TraesROB_scaffold_057321_01G000100.1"/>
    <property type="gene ID" value="TraesROB_scaffold_057321_01G000100"/>
</dbReference>
<dbReference type="Gramene" id="TraesSYM7B03G04213830.1">
    <property type="protein sequence ID" value="TraesSYM7B03G04213830.1"/>
    <property type="gene ID" value="TraesSYM7B03G04213830"/>
</dbReference>
<dbReference type="KEGG" id="ag:AAP23942"/>
<dbReference type="eggNOG" id="KOG3178">
    <property type="taxonomic scope" value="Eukaryota"/>
</dbReference>
<dbReference type="OMA" id="VIIVECI"/>
<dbReference type="BRENDA" id="2.1.1.169">
    <property type="organism ID" value="6500"/>
</dbReference>
<dbReference type="SABIO-RK" id="Q84N28"/>
<dbReference type="Proteomes" id="UP000019116">
    <property type="component" value="Chromosome 7B"/>
</dbReference>
<dbReference type="GO" id="GO:0008171">
    <property type="term" value="F:O-methyltransferase activity"/>
    <property type="evidence" value="ECO:0000318"/>
    <property type="project" value="GO_Central"/>
</dbReference>
<dbReference type="GO" id="GO:0046983">
    <property type="term" value="F:protein dimerization activity"/>
    <property type="evidence" value="ECO:0007669"/>
    <property type="project" value="InterPro"/>
</dbReference>
<dbReference type="GO" id="GO:0008757">
    <property type="term" value="F:S-adenosylmethionine-dependent methyltransferase activity"/>
    <property type="evidence" value="ECO:0000318"/>
    <property type="project" value="GO_Central"/>
</dbReference>
<dbReference type="GO" id="GO:0009058">
    <property type="term" value="P:biosynthetic process"/>
    <property type="evidence" value="ECO:0000318"/>
    <property type="project" value="GO_Central"/>
</dbReference>
<dbReference type="GO" id="GO:0009813">
    <property type="term" value="P:flavonoid biosynthetic process"/>
    <property type="evidence" value="ECO:0007669"/>
    <property type="project" value="UniProtKB-KW"/>
</dbReference>
<dbReference type="GO" id="GO:0032259">
    <property type="term" value="P:methylation"/>
    <property type="evidence" value="ECO:0000318"/>
    <property type="project" value="GO_Central"/>
</dbReference>
<dbReference type="GO" id="GO:0009723">
    <property type="term" value="P:response to ethylene"/>
    <property type="evidence" value="ECO:0000314"/>
    <property type="project" value="UniProtKB"/>
</dbReference>
<dbReference type="GO" id="GO:0042542">
    <property type="term" value="P:response to hydrogen peroxide"/>
    <property type="evidence" value="ECO:0000314"/>
    <property type="project" value="UniProtKB"/>
</dbReference>
<dbReference type="GO" id="GO:0009751">
    <property type="term" value="P:response to salicylic acid"/>
    <property type="evidence" value="ECO:0000314"/>
    <property type="project" value="UniProtKB"/>
</dbReference>
<dbReference type="GO" id="GO:0009611">
    <property type="term" value="P:response to wounding"/>
    <property type="evidence" value="ECO:0000314"/>
    <property type="project" value="UniProtKB"/>
</dbReference>
<dbReference type="FunFam" id="1.10.10.10:FF:000473">
    <property type="entry name" value="Caffeic acid O-methyltransferase"/>
    <property type="match status" value="1"/>
</dbReference>
<dbReference type="FunFam" id="3.40.50.150:FF:000061">
    <property type="entry name" value="Caffeic acid O-methyltransferase"/>
    <property type="match status" value="1"/>
</dbReference>
<dbReference type="Gene3D" id="3.40.50.150">
    <property type="entry name" value="Vaccinia Virus protein VP39"/>
    <property type="match status" value="1"/>
</dbReference>
<dbReference type="Gene3D" id="1.10.10.10">
    <property type="entry name" value="Winged helix-like DNA-binding domain superfamily/Winged helix DNA-binding domain"/>
    <property type="match status" value="1"/>
</dbReference>
<dbReference type="InterPro" id="IPR016461">
    <property type="entry name" value="COMT-like"/>
</dbReference>
<dbReference type="InterPro" id="IPR001077">
    <property type="entry name" value="O_MeTrfase_dom"/>
</dbReference>
<dbReference type="InterPro" id="IPR012967">
    <property type="entry name" value="Plant_O-MeTrfase_dimerisation"/>
</dbReference>
<dbReference type="InterPro" id="IPR029063">
    <property type="entry name" value="SAM-dependent_MTases_sf"/>
</dbReference>
<dbReference type="InterPro" id="IPR036388">
    <property type="entry name" value="WH-like_DNA-bd_sf"/>
</dbReference>
<dbReference type="InterPro" id="IPR036390">
    <property type="entry name" value="WH_DNA-bd_sf"/>
</dbReference>
<dbReference type="PANTHER" id="PTHR11746">
    <property type="entry name" value="O-METHYLTRANSFERASE"/>
    <property type="match status" value="1"/>
</dbReference>
<dbReference type="Pfam" id="PF08100">
    <property type="entry name" value="Dimerisation"/>
    <property type="match status" value="1"/>
</dbReference>
<dbReference type="Pfam" id="PF00891">
    <property type="entry name" value="Methyltransf_2"/>
    <property type="match status" value="1"/>
</dbReference>
<dbReference type="PIRSF" id="PIRSF005739">
    <property type="entry name" value="O-mtase"/>
    <property type="match status" value="1"/>
</dbReference>
<dbReference type="SUPFAM" id="SSF53335">
    <property type="entry name" value="S-adenosyl-L-methionine-dependent methyltransferases"/>
    <property type="match status" value="1"/>
</dbReference>
<dbReference type="SUPFAM" id="SSF46785">
    <property type="entry name" value="Winged helix' DNA-binding domain"/>
    <property type="match status" value="1"/>
</dbReference>
<dbReference type="PROSITE" id="PS51683">
    <property type="entry name" value="SAM_OMT_II"/>
    <property type="match status" value="1"/>
</dbReference>
<keyword id="KW-0284">Flavonoid biosynthesis</keyword>
<keyword id="KW-0489">Methyltransferase</keyword>
<keyword id="KW-1185">Reference proteome</keyword>
<keyword id="KW-0949">S-adenosyl-L-methionine</keyword>
<keyword id="KW-0808">Transferase</keyword>
<accession>Q84N28</accession>
<organism>
    <name type="scientific">Triticum aestivum</name>
    <name type="common">Wheat</name>
    <dbReference type="NCBI Taxonomy" id="4565"/>
    <lineage>
        <taxon>Eukaryota</taxon>
        <taxon>Viridiplantae</taxon>
        <taxon>Streptophyta</taxon>
        <taxon>Embryophyta</taxon>
        <taxon>Tracheophyta</taxon>
        <taxon>Spermatophyta</taxon>
        <taxon>Magnoliopsida</taxon>
        <taxon>Liliopsida</taxon>
        <taxon>Poales</taxon>
        <taxon>Poaceae</taxon>
        <taxon>BOP clade</taxon>
        <taxon>Pooideae</taxon>
        <taxon>Triticodae</taxon>
        <taxon>Triticeae</taxon>
        <taxon>Triticinae</taxon>
        <taxon>Triticum</taxon>
    </lineage>
</organism>
<sequence>MGSTAADMAASADEEACMYALQLVSSSILPMTLKNAIELGLLETLVAAGGKLLTPAEVAAKLPSTANPAAADMVDRMLRLLASYNVVSCTMEEGKDGRLSRRYRAAPVCKFLTPNEDGVSMAALALMNQDKVLMESWYYLKDAVLDGGIPFNKAYGMSAFEYHGTDPRFNRVFNEGMKNHSIIITKKLLEVYKGFEGLGTIVDVGGGVGATVGAITAAYPAIKGINFDLPHVISEAQPFPGVTHVGGDMFQKVPSGDAILMKWILHDWSDEHCATLLKNCYDALPAHGKVVLVECILPVNPEATPKAQGVFHVDMIMLAHNPGGRERYEREFEALAKGAGFKAIKTTYIYANAFAIEFTK</sequence>
<reference key="1">
    <citation type="journal article" date="2005" name="Plant Sci.">
        <title>Differential expression of TaLTP3 and TaCOMT1 induced by Hessian fly larval infestation in a wheat line possessing H21 resistance gene.</title>
        <authorList>
            <person name="Jang C.S."/>
            <person name="Johnson J.W."/>
            <person name="Seo Y.W."/>
        </authorList>
    </citation>
    <scope>NUCLEOTIDE SEQUENCE [MRNA]</scope>
    <scope>INDUCTION BY PATHOGEN; METHYL JASMONATE; SALICYLIC ACID; ETHYLENE; HYDROGEN PEROXIDE AND WOUNDING</scope>
</reference>
<reference key="2">
    <citation type="journal article" date="2009" name="Plant Physiol. Biochem.">
        <title>Biochemical characterization of a putative wheat caffeic acid O-methyltransferase.</title>
        <authorList>
            <person name="Zhou J.M."/>
            <person name="Seo Y.W."/>
            <person name="Ibrahim R.K."/>
        </authorList>
    </citation>
    <scope>FUNCTION</scope>
    <scope>CATALYTIC ACTIVITY</scope>
    <scope>BIOPHYSICOCHEMICAL PROPERTIES</scope>
</reference>
<evidence type="ECO:0000250" key="1"/>
<evidence type="ECO:0000255" key="2">
    <source>
        <dbReference type="PROSITE-ProRule" id="PRU01020"/>
    </source>
</evidence>
<evidence type="ECO:0000269" key="3">
    <source>
    </source>
</evidence>
<evidence type="ECO:0000269" key="4">
    <source ref="1"/>
</evidence>